<protein>
    <recommendedName>
        <fullName>N-acetylaspartylglutamate synthase A</fullName>
        <shortName>NAAG synthetase A</shortName>
        <shortName>NAAGS</shortName>
        <ecNumber evidence="4 5">6.3.2.41</ecNumber>
    </recommendedName>
    <alternativeName>
        <fullName>N-acetylaspartylglutamylglutamate synthase A</fullName>
        <ecNumber evidence="5">6.3.2.42</ecNumber>
    </alternativeName>
    <alternativeName>
        <fullName>Ribosomal protein S6 modification-like protein A</fullName>
    </alternativeName>
</protein>
<accession>Q6PFX8</accession>
<accession>Q8BXH0</accession>
<name>RIMKA_MOUSE</name>
<dbReference type="EC" id="6.3.2.41" evidence="4 5"/>
<dbReference type="EC" id="6.3.2.42" evidence="5"/>
<dbReference type="EMBL" id="AK047164">
    <property type="protein sequence ID" value="BAC32976.1"/>
    <property type="molecule type" value="mRNA"/>
</dbReference>
<dbReference type="EMBL" id="AL645563">
    <property type="status" value="NOT_ANNOTATED_CDS"/>
    <property type="molecule type" value="Genomic_DNA"/>
</dbReference>
<dbReference type="EMBL" id="BC057371">
    <property type="protein sequence ID" value="AAH57371.1"/>
    <property type="molecule type" value="mRNA"/>
</dbReference>
<dbReference type="CCDS" id="CCDS18583.1"/>
<dbReference type="RefSeq" id="NP_808240.2">
    <property type="nucleotide sequence ID" value="NM_177572.4"/>
</dbReference>
<dbReference type="SMR" id="Q6PFX8"/>
<dbReference type="FunCoup" id="Q6PFX8">
    <property type="interactions" value="95"/>
</dbReference>
<dbReference type="STRING" id="10090.ENSMUSP00000058996"/>
<dbReference type="iPTMnet" id="Q6PFX8"/>
<dbReference type="PhosphoSitePlus" id="Q6PFX8"/>
<dbReference type="PaxDb" id="10090-ENSMUSP00000058996"/>
<dbReference type="ProteomicsDB" id="255269"/>
<dbReference type="Antibodypedia" id="32199">
    <property type="antibodies" value="82 antibodies from 21 providers"/>
</dbReference>
<dbReference type="Ensembl" id="ENSMUST00000049994.8">
    <property type="protein sequence ID" value="ENSMUSP00000058996.8"/>
    <property type="gene ID" value="ENSMUSG00000048899.9"/>
</dbReference>
<dbReference type="GeneID" id="194237"/>
<dbReference type="KEGG" id="mmu:194237"/>
<dbReference type="UCSC" id="uc008umo.3">
    <property type="organism name" value="mouse"/>
</dbReference>
<dbReference type="AGR" id="MGI:3040686"/>
<dbReference type="CTD" id="284716"/>
<dbReference type="MGI" id="MGI:3040686">
    <property type="gene designation" value="Rimkla"/>
</dbReference>
<dbReference type="VEuPathDB" id="HostDB:ENSMUSG00000048899"/>
<dbReference type="eggNOG" id="ENOG502QT4M">
    <property type="taxonomic scope" value="Eukaryota"/>
</dbReference>
<dbReference type="GeneTree" id="ENSGT00390000014577"/>
<dbReference type="HOGENOM" id="CLU_054353_3_1_1"/>
<dbReference type="InParanoid" id="Q6PFX8"/>
<dbReference type="OMA" id="EKHGVMV"/>
<dbReference type="OrthoDB" id="10265738at2759"/>
<dbReference type="PhylomeDB" id="Q6PFX8"/>
<dbReference type="TreeFam" id="TF332035"/>
<dbReference type="BRENDA" id="6.3.2.41">
    <property type="organism ID" value="3474"/>
</dbReference>
<dbReference type="BRENDA" id="6.3.2.42">
    <property type="organism ID" value="3474"/>
</dbReference>
<dbReference type="Reactome" id="R-MMU-8964539">
    <property type="pathway name" value="Glutamate and glutamine metabolism"/>
</dbReference>
<dbReference type="BioGRID-ORCS" id="194237">
    <property type="hits" value="5 hits in 76 CRISPR screens"/>
</dbReference>
<dbReference type="PRO" id="PR:Q6PFX8"/>
<dbReference type="Proteomes" id="UP000000589">
    <property type="component" value="Chromosome 4"/>
</dbReference>
<dbReference type="RNAct" id="Q6PFX8">
    <property type="molecule type" value="protein"/>
</dbReference>
<dbReference type="Bgee" id="ENSMUSG00000048899">
    <property type="expression patterns" value="Expressed in secondary oocyte and 137 other cell types or tissues"/>
</dbReference>
<dbReference type="GO" id="GO:0005737">
    <property type="term" value="C:cytoplasm"/>
    <property type="evidence" value="ECO:0000314"/>
    <property type="project" value="MGI"/>
</dbReference>
<dbReference type="GO" id="GO:0005524">
    <property type="term" value="F:ATP binding"/>
    <property type="evidence" value="ECO:0007669"/>
    <property type="project" value="UniProtKB-KW"/>
</dbReference>
<dbReference type="GO" id="GO:0046872">
    <property type="term" value="F:metal ion binding"/>
    <property type="evidence" value="ECO:0007669"/>
    <property type="project" value="UniProtKB-KW"/>
</dbReference>
<dbReference type="GO" id="GO:0072590">
    <property type="term" value="F:N-acetyl-L-aspartate-L-glutamate ligase activity"/>
    <property type="evidence" value="ECO:0000314"/>
    <property type="project" value="UniProtKB"/>
</dbReference>
<dbReference type="GO" id="GO:0036211">
    <property type="term" value="P:protein modification process"/>
    <property type="evidence" value="ECO:0007669"/>
    <property type="project" value="InterPro"/>
</dbReference>
<dbReference type="FunFam" id="3.30.1490.20:FF:000011">
    <property type="entry name" value="beta-citrylglutamate synthase B isoform X1"/>
    <property type="match status" value="1"/>
</dbReference>
<dbReference type="FunFam" id="3.30.470.20:FF:000022">
    <property type="entry name" value="beta-citrylglutamate synthase B isoform X1"/>
    <property type="match status" value="1"/>
</dbReference>
<dbReference type="FunFam" id="3.40.50.20:FF:000014">
    <property type="entry name" value="beta-citrylglutamate synthase B isoform X1"/>
    <property type="match status" value="1"/>
</dbReference>
<dbReference type="Gene3D" id="3.40.50.20">
    <property type="match status" value="1"/>
</dbReference>
<dbReference type="Gene3D" id="3.30.1490.20">
    <property type="entry name" value="ATP-grasp fold, A domain"/>
    <property type="match status" value="1"/>
</dbReference>
<dbReference type="Gene3D" id="3.30.470.20">
    <property type="entry name" value="ATP-grasp fold, B domain"/>
    <property type="match status" value="1"/>
</dbReference>
<dbReference type="InterPro" id="IPR011761">
    <property type="entry name" value="ATP-grasp"/>
</dbReference>
<dbReference type="InterPro" id="IPR013651">
    <property type="entry name" value="ATP-grasp_RimK-type"/>
</dbReference>
<dbReference type="InterPro" id="IPR013815">
    <property type="entry name" value="ATP_grasp_subdomain_1"/>
</dbReference>
<dbReference type="InterPro" id="IPR004666">
    <property type="entry name" value="Rp_bS6_RimK/Lys_biosynth_LsyX"/>
</dbReference>
<dbReference type="NCBIfam" id="TIGR00768">
    <property type="entry name" value="rimK_fam"/>
    <property type="match status" value="1"/>
</dbReference>
<dbReference type="PANTHER" id="PTHR21621:SF1">
    <property type="entry name" value="N-ACETYLASPARTYLGLUTAMATE SYNTHASE A"/>
    <property type="match status" value="1"/>
</dbReference>
<dbReference type="PANTHER" id="PTHR21621">
    <property type="entry name" value="RIBOSOMAL PROTEIN S6 MODIFICATION PROTEIN"/>
    <property type="match status" value="1"/>
</dbReference>
<dbReference type="Pfam" id="PF08443">
    <property type="entry name" value="RimK"/>
    <property type="match status" value="1"/>
</dbReference>
<dbReference type="SUPFAM" id="SSF56059">
    <property type="entry name" value="Glutathione synthetase ATP-binding domain-like"/>
    <property type="match status" value="1"/>
</dbReference>
<dbReference type="PROSITE" id="PS50975">
    <property type="entry name" value="ATP_GRASP"/>
    <property type="match status" value="1"/>
</dbReference>
<feature type="chain" id="PRO_0000282569" description="N-acetylaspartylglutamate synthase A">
    <location>
        <begin position="1"/>
        <end position="380"/>
    </location>
</feature>
<feature type="domain" description="ATP-grasp" evidence="2">
    <location>
        <begin position="115"/>
        <end position="300"/>
    </location>
</feature>
<feature type="region of interest" description="Disordered" evidence="3">
    <location>
        <begin position="345"/>
        <end position="370"/>
    </location>
</feature>
<feature type="binding site" evidence="1">
    <location>
        <position position="154"/>
    </location>
    <ligand>
        <name>ATP</name>
        <dbReference type="ChEBI" id="CHEBI:30616"/>
    </ligand>
</feature>
<feature type="binding site" evidence="2">
    <location>
        <begin position="189"/>
        <end position="199"/>
    </location>
    <ligand>
        <name>ATP</name>
        <dbReference type="ChEBI" id="CHEBI:30616"/>
    </ligand>
</feature>
<feature type="binding site" evidence="1">
    <location>
        <position position="215"/>
    </location>
    <ligand>
        <name>ATP</name>
        <dbReference type="ChEBI" id="CHEBI:30616"/>
    </ligand>
</feature>
<feature type="binding site" evidence="2">
    <location>
        <position position="260"/>
    </location>
    <ligand>
        <name>Mg(2+)</name>
        <dbReference type="ChEBI" id="CHEBI:18420"/>
        <label>1</label>
    </ligand>
</feature>
<feature type="binding site" evidence="2">
    <location>
        <position position="260"/>
    </location>
    <ligand>
        <name>Mn(2+)</name>
        <dbReference type="ChEBI" id="CHEBI:29035"/>
        <label>1</label>
    </ligand>
</feature>
<feature type="binding site" evidence="2">
    <location>
        <position position="273"/>
    </location>
    <ligand>
        <name>Mg(2+)</name>
        <dbReference type="ChEBI" id="CHEBI:18420"/>
        <label>1</label>
    </ligand>
</feature>
<feature type="binding site" evidence="2">
    <location>
        <position position="273"/>
    </location>
    <ligand>
        <name>Mg(2+)</name>
        <dbReference type="ChEBI" id="CHEBI:18420"/>
        <label>2</label>
    </ligand>
</feature>
<feature type="binding site" evidence="2">
    <location>
        <position position="273"/>
    </location>
    <ligand>
        <name>Mn(2+)</name>
        <dbReference type="ChEBI" id="CHEBI:29035"/>
        <label>1</label>
    </ligand>
</feature>
<feature type="binding site" evidence="2">
    <location>
        <position position="273"/>
    </location>
    <ligand>
        <name>Mn(2+)</name>
        <dbReference type="ChEBI" id="CHEBI:29035"/>
        <label>2</label>
    </ligand>
</feature>
<feature type="binding site" evidence="2">
    <location>
        <position position="275"/>
    </location>
    <ligand>
        <name>Mg(2+)</name>
        <dbReference type="ChEBI" id="CHEBI:18420"/>
        <label>2</label>
    </ligand>
</feature>
<feature type="binding site" evidence="2">
    <location>
        <position position="275"/>
    </location>
    <ligand>
        <name>Mn(2+)</name>
        <dbReference type="ChEBI" id="CHEBI:29035"/>
        <label>2</label>
    </ligand>
</feature>
<feature type="modified residue" description="Phosphoserine" evidence="8">
    <location>
        <position position="319"/>
    </location>
</feature>
<feature type="sequence conflict" description="In Ref. 1; BAC32976." evidence="7" ref="1">
    <original>P</original>
    <variation>R</variation>
    <location>
        <position position="369"/>
    </location>
</feature>
<evidence type="ECO:0000250" key="1"/>
<evidence type="ECO:0000255" key="2">
    <source>
        <dbReference type="PROSITE-ProRule" id="PRU00409"/>
    </source>
</evidence>
<evidence type="ECO:0000256" key="3">
    <source>
        <dbReference type="SAM" id="MobiDB-lite"/>
    </source>
</evidence>
<evidence type="ECO:0000269" key="4">
    <source>
    </source>
</evidence>
<evidence type="ECO:0000269" key="5">
    <source>
    </source>
</evidence>
<evidence type="ECO:0000303" key="6">
    <source>
    </source>
</evidence>
<evidence type="ECO:0000305" key="7"/>
<evidence type="ECO:0007744" key="8">
    <source>
    </source>
</evidence>
<comment type="function">
    <text evidence="4 5">Catalyzes the synthesis of N-acetyl-L-aspartyl-L-glutamate (NAAG) and N-acetyl-L-aspartyl-L-glutamyl-L-glutamate.</text>
</comment>
<comment type="catalytic activity">
    <reaction evidence="4 5">
        <text>N-acetyl-L-aspartate + L-glutamate + ATP = N-acetyl-L-aspartyl-L-glutamate + ADP + phosphate + H(+)</text>
        <dbReference type="Rhea" id="RHEA:40035"/>
        <dbReference type="ChEBI" id="CHEBI:15378"/>
        <dbReference type="ChEBI" id="CHEBI:16953"/>
        <dbReference type="ChEBI" id="CHEBI:29985"/>
        <dbReference type="ChEBI" id="CHEBI:30616"/>
        <dbReference type="ChEBI" id="CHEBI:43474"/>
        <dbReference type="ChEBI" id="CHEBI:76931"/>
        <dbReference type="ChEBI" id="CHEBI:456216"/>
        <dbReference type="EC" id="6.3.2.41"/>
    </reaction>
</comment>
<comment type="catalytic activity">
    <reaction evidence="5">
        <text>N-acetyl-L-aspartate + 2 L-glutamate + 2 ATP = N-acetyl-L-aspartyl-L-glutamyl-L-glutamate + 2 ADP + 2 phosphate + 2 H(+)</text>
        <dbReference type="Rhea" id="RHEA:40039"/>
        <dbReference type="ChEBI" id="CHEBI:15378"/>
        <dbReference type="ChEBI" id="CHEBI:16953"/>
        <dbReference type="ChEBI" id="CHEBI:29985"/>
        <dbReference type="ChEBI" id="CHEBI:30616"/>
        <dbReference type="ChEBI" id="CHEBI:43474"/>
        <dbReference type="ChEBI" id="CHEBI:76935"/>
        <dbReference type="ChEBI" id="CHEBI:456216"/>
        <dbReference type="EC" id="6.3.2.42"/>
    </reaction>
</comment>
<comment type="cofactor">
    <cofactor evidence="1">
        <name>Mg(2+)</name>
        <dbReference type="ChEBI" id="CHEBI:18420"/>
    </cofactor>
    <cofactor evidence="1">
        <name>Mn(2+)</name>
        <dbReference type="ChEBI" id="CHEBI:29035"/>
    </cofactor>
    <text evidence="1">Binds 2 magnesium or manganese ions per subunit.</text>
</comment>
<comment type="subcellular location">
    <subcellularLocation>
        <location evidence="7">Cytoplasm</location>
    </subcellularLocation>
</comment>
<comment type="tissue specificity">
    <text evidence="5">Highly expressed in spinal cord and brain.</text>
</comment>
<comment type="miscellaneous">
    <text evidence="6">N-acetyl-L-aspartyl-L-glutamate (NAAG) is the most abundant dipeptide present in vertebrate central nervous system (CNS).</text>
</comment>
<comment type="similarity">
    <text evidence="7">Belongs to the RimK family.</text>
</comment>
<gene>
    <name type="primary">Rimkla</name>
    <name type="synonym">Fam80a</name>
    <name type="synonym">Rimk</name>
</gene>
<keyword id="KW-0067">ATP-binding</keyword>
<keyword id="KW-0963">Cytoplasm</keyword>
<keyword id="KW-0436">Ligase</keyword>
<keyword id="KW-0460">Magnesium</keyword>
<keyword id="KW-0464">Manganese</keyword>
<keyword id="KW-0479">Metal-binding</keyword>
<keyword id="KW-0547">Nucleotide-binding</keyword>
<keyword id="KW-0597">Phosphoprotein</keyword>
<keyword id="KW-1185">Reference proteome</keyword>
<reference key="1">
    <citation type="journal article" date="2005" name="Science">
        <title>The transcriptional landscape of the mammalian genome.</title>
        <authorList>
            <person name="Carninci P."/>
            <person name="Kasukawa T."/>
            <person name="Katayama S."/>
            <person name="Gough J."/>
            <person name="Frith M.C."/>
            <person name="Maeda N."/>
            <person name="Oyama R."/>
            <person name="Ravasi T."/>
            <person name="Lenhard B."/>
            <person name="Wells C."/>
            <person name="Kodzius R."/>
            <person name="Shimokawa K."/>
            <person name="Bajic V.B."/>
            <person name="Brenner S.E."/>
            <person name="Batalov S."/>
            <person name="Forrest A.R."/>
            <person name="Zavolan M."/>
            <person name="Davis M.J."/>
            <person name="Wilming L.G."/>
            <person name="Aidinis V."/>
            <person name="Allen J.E."/>
            <person name="Ambesi-Impiombato A."/>
            <person name="Apweiler R."/>
            <person name="Aturaliya R.N."/>
            <person name="Bailey T.L."/>
            <person name="Bansal M."/>
            <person name="Baxter L."/>
            <person name="Beisel K.W."/>
            <person name="Bersano T."/>
            <person name="Bono H."/>
            <person name="Chalk A.M."/>
            <person name="Chiu K.P."/>
            <person name="Choudhary V."/>
            <person name="Christoffels A."/>
            <person name="Clutterbuck D.R."/>
            <person name="Crowe M.L."/>
            <person name="Dalla E."/>
            <person name="Dalrymple B.P."/>
            <person name="de Bono B."/>
            <person name="Della Gatta G."/>
            <person name="di Bernardo D."/>
            <person name="Down T."/>
            <person name="Engstrom P."/>
            <person name="Fagiolini M."/>
            <person name="Faulkner G."/>
            <person name="Fletcher C.F."/>
            <person name="Fukushima T."/>
            <person name="Furuno M."/>
            <person name="Futaki S."/>
            <person name="Gariboldi M."/>
            <person name="Georgii-Hemming P."/>
            <person name="Gingeras T.R."/>
            <person name="Gojobori T."/>
            <person name="Green R.E."/>
            <person name="Gustincich S."/>
            <person name="Harbers M."/>
            <person name="Hayashi Y."/>
            <person name="Hensch T.K."/>
            <person name="Hirokawa N."/>
            <person name="Hill D."/>
            <person name="Huminiecki L."/>
            <person name="Iacono M."/>
            <person name="Ikeo K."/>
            <person name="Iwama A."/>
            <person name="Ishikawa T."/>
            <person name="Jakt M."/>
            <person name="Kanapin A."/>
            <person name="Katoh M."/>
            <person name="Kawasawa Y."/>
            <person name="Kelso J."/>
            <person name="Kitamura H."/>
            <person name="Kitano H."/>
            <person name="Kollias G."/>
            <person name="Krishnan S.P."/>
            <person name="Kruger A."/>
            <person name="Kummerfeld S.K."/>
            <person name="Kurochkin I.V."/>
            <person name="Lareau L.F."/>
            <person name="Lazarevic D."/>
            <person name="Lipovich L."/>
            <person name="Liu J."/>
            <person name="Liuni S."/>
            <person name="McWilliam S."/>
            <person name="Madan Babu M."/>
            <person name="Madera M."/>
            <person name="Marchionni L."/>
            <person name="Matsuda H."/>
            <person name="Matsuzawa S."/>
            <person name="Miki H."/>
            <person name="Mignone F."/>
            <person name="Miyake S."/>
            <person name="Morris K."/>
            <person name="Mottagui-Tabar S."/>
            <person name="Mulder N."/>
            <person name="Nakano N."/>
            <person name="Nakauchi H."/>
            <person name="Ng P."/>
            <person name="Nilsson R."/>
            <person name="Nishiguchi S."/>
            <person name="Nishikawa S."/>
            <person name="Nori F."/>
            <person name="Ohara O."/>
            <person name="Okazaki Y."/>
            <person name="Orlando V."/>
            <person name="Pang K.C."/>
            <person name="Pavan W.J."/>
            <person name="Pavesi G."/>
            <person name="Pesole G."/>
            <person name="Petrovsky N."/>
            <person name="Piazza S."/>
            <person name="Reed J."/>
            <person name="Reid J.F."/>
            <person name="Ring B.Z."/>
            <person name="Ringwald M."/>
            <person name="Rost B."/>
            <person name="Ruan Y."/>
            <person name="Salzberg S.L."/>
            <person name="Sandelin A."/>
            <person name="Schneider C."/>
            <person name="Schoenbach C."/>
            <person name="Sekiguchi K."/>
            <person name="Semple C.A."/>
            <person name="Seno S."/>
            <person name="Sessa L."/>
            <person name="Sheng Y."/>
            <person name="Shibata Y."/>
            <person name="Shimada H."/>
            <person name="Shimada K."/>
            <person name="Silva D."/>
            <person name="Sinclair B."/>
            <person name="Sperling S."/>
            <person name="Stupka E."/>
            <person name="Sugiura K."/>
            <person name="Sultana R."/>
            <person name="Takenaka Y."/>
            <person name="Taki K."/>
            <person name="Tammoja K."/>
            <person name="Tan S.L."/>
            <person name="Tang S."/>
            <person name="Taylor M.S."/>
            <person name="Tegner J."/>
            <person name="Teichmann S.A."/>
            <person name="Ueda H.R."/>
            <person name="van Nimwegen E."/>
            <person name="Verardo R."/>
            <person name="Wei C.L."/>
            <person name="Yagi K."/>
            <person name="Yamanishi H."/>
            <person name="Zabarovsky E."/>
            <person name="Zhu S."/>
            <person name="Zimmer A."/>
            <person name="Hide W."/>
            <person name="Bult C."/>
            <person name="Grimmond S.M."/>
            <person name="Teasdale R.D."/>
            <person name="Liu E.T."/>
            <person name="Brusic V."/>
            <person name="Quackenbush J."/>
            <person name="Wahlestedt C."/>
            <person name="Mattick J.S."/>
            <person name="Hume D.A."/>
            <person name="Kai C."/>
            <person name="Sasaki D."/>
            <person name="Tomaru Y."/>
            <person name="Fukuda S."/>
            <person name="Kanamori-Katayama M."/>
            <person name="Suzuki M."/>
            <person name="Aoki J."/>
            <person name="Arakawa T."/>
            <person name="Iida J."/>
            <person name="Imamura K."/>
            <person name="Itoh M."/>
            <person name="Kato T."/>
            <person name="Kawaji H."/>
            <person name="Kawagashira N."/>
            <person name="Kawashima T."/>
            <person name="Kojima M."/>
            <person name="Kondo S."/>
            <person name="Konno H."/>
            <person name="Nakano K."/>
            <person name="Ninomiya N."/>
            <person name="Nishio T."/>
            <person name="Okada M."/>
            <person name="Plessy C."/>
            <person name="Shibata K."/>
            <person name="Shiraki T."/>
            <person name="Suzuki S."/>
            <person name="Tagami M."/>
            <person name="Waki K."/>
            <person name="Watahiki A."/>
            <person name="Okamura-Oho Y."/>
            <person name="Suzuki H."/>
            <person name="Kawai J."/>
            <person name="Hayashizaki Y."/>
        </authorList>
    </citation>
    <scope>NUCLEOTIDE SEQUENCE [LARGE SCALE MRNA]</scope>
    <source>
        <strain>C57BL/6J</strain>
        <tissue>Cerebellum</tissue>
    </source>
</reference>
<reference key="2">
    <citation type="journal article" date="2009" name="PLoS Biol.">
        <title>Lineage-specific biology revealed by a finished genome assembly of the mouse.</title>
        <authorList>
            <person name="Church D.M."/>
            <person name="Goodstadt L."/>
            <person name="Hillier L.W."/>
            <person name="Zody M.C."/>
            <person name="Goldstein S."/>
            <person name="She X."/>
            <person name="Bult C.J."/>
            <person name="Agarwala R."/>
            <person name="Cherry J.L."/>
            <person name="DiCuccio M."/>
            <person name="Hlavina W."/>
            <person name="Kapustin Y."/>
            <person name="Meric P."/>
            <person name="Maglott D."/>
            <person name="Birtle Z."/>
            <person name="Marques A.C."/>
            <person name="Graves T."/>
            <person name="Zhou S."/>
            <person name="Teague B."/>
            <person name="Potamousis K."/>
            <person name="Churas C."/>
            <person name="Place M."/>
            <person name="Herschleb J."/>
            <person name="Runnheim R."/>
            <person name="Forrest D."/>
            <person name="Amos-Landgraf J."/>
            <person name="Schwartz D.C."/>
            <person name="Cheng Z."/>
            <person name="Lindblad-Toh K."/>
            <person name="Eichler E.E."/>
            <person name="Ponting C.P."/>
        </authorList>
    </citation>
    <scope>NUCLEOTIDE SEQUENCE [LARGE SCALE GENOMIC DNA]</scope>
    <source>
        <strain>C57BL/6J</strain>
    </source>
</reference>
<reference key="3">
    <citation type="journal article" date="2004" name="Genome Res.">
        <title>The status, quality, and expansion of the NIH full-length cDNA project: the Mammalian Gene Collection (MGC).</title>
        <authorList>
            <consortium name="The MGC Project Team"/>
        </authorList>
    </citation>
    <scope>NUCLEOTIDE SEQUENCE [LARGE SCALE MRNA]</scope>
    <source>
        <strain>C57BL/6J</strain>
        <tissue>Brain</tissue>
    </source>
</reference>
<reference key="4">
    <citation type="journal article" date="2010" name="Cell">
        <title>A tissue-specific atlas of mouse protein phosphorylation and expression.</title>
        <authorList>
            <person name="Huttlin E.L."/>
            <person name="Jedrychowski M.P."/>
            <person name="Elias J.E."/>
            <person name="Goswami T."/>
            <person name="Rad R."/>
            <person name="Beausoleil S.A."/>
            <person name="Villen J."/>
            <person name="Haas W."/>
            <person name="Sowa M.E."/>
            <person name="Gygi S.P."/>
        </authorList>
    </citation>
    <scope>PHOSPHORYLATION [LARGE SCALE ANALYSIS] AT SER-319</scope>
    <scope>IDENTIFICATION BY MASS SPECTROMETRY [LARGE SCALE ANALYSIS]</scope>
    <source>
        <tissue>Brain</tissue>
    </source>
</reference>
<reference key="5">
    <citation type="journal article" date="2010" name="J. Biol. Chem.">
        <title>Molecular identification of N-acetylaspartylglutamate synthase and beta-citrylglutamate synthase.</title>
        <authorList>
            <person name="Collard F."/>
            <person name="Stroobant V."/>
            <person name="Lamosa P."/>
            <person name="Kapanda C.N."/>
            <person name="Lambert D.M."/>
            <person name="Muccioli G.G."/>
            <person name="Poupaert J.H."/>
            <person name="Opperdoes F."/>
            <person name="Van Schaftingen E."/>
        </authorList>
    </citation>
    <scope>FUNCTION</scope>
    <scope>CATALYTIC ACTIVITY</scope>
</reference>
<reference key="6">
    <citation type="journal article" date="2011" name="J. Biol. Chem.">
        <title>N-acetylaspartylglutamate synthetase II synthesizes N-acetylaspartylglutamylglutamate.</title>
        <authorList>
            <person name="Lodder-Gadaczek J."/>
            <person name="Becker I."/>
            <person name="Gieselmann V."/>
            <person name="Wang-Eckhardt L."/>
            <person name="Eckhardt M."/>
        </authorList>
    </citation>
    <scope>FUNCTION</scope>
    <scope>CATALYTIC ACTIVITY</scope>
    <scope>TISSUE SPECIFICITY</scope>
</reference>
<organism>
    <name type="scientific">Mus musculus</name>
    <name type="common">Mouse</name>
    <dbReference type="NCBI Taxonomy" id="10090"/>
    <lineage>
        <taxon>Eukaryota</taxon>
        <taxon>Metazoa</taxon>
        <taxon>Chordata</taxon>
        <taxon>Craniata</taxon>
        <taxon>Vertebrata</taxon>
        <taxon>Euteleostomi</taxon>
        <taxon>Mammalia</taxon>
        <taxon>Eutheria</taxon>
        <taxon>Euarchontoglires</taxon>
        <taxon>Glires</taxon>
        <taxon>Rodentia</taxon>
        <taxon>Myomorpha</taxon>
        <taxon>Muroidea</taxon>
        <taxon>Muridae</taxon>
        <taxon>Murinae</taxon>
        <taxon>Mus</taxon>
        <taxon>Mus</taxon>
    </lineage>
</organism>
<sequence>MCAQVWLLTDRLIREDYPQVQILRALRQRCSEQDVGFRAVFLDQIAVTVVGGHLGLQLSQKPLTTFPDVVVVRVSTPSVQSDSEITILRHLEKLGCRLVNRPQSILNCINKFWTFQELAGHGVPMPDTFSYGGHEDFSKMIDEAEPLGYPVVVKSTRGHRGKAVFLARDKHHLSDICHLVRHDVPYLFQKYVKESHGKDIRVVVVGGQVIGSMLRCSTDGRMQSNCFLGGVGVKCPLTEQGKQLAIQVSNILGMDFCGIDLLIMDDGSFTVCEANANVGFLAFDQACNLDVGAIIADYAMSLLPNRQTGKMAILPGLASPREKNEPNGCVSAQGVAESVYAITNGSTSSESEPELGEARDSSVKTMGAPPAHVAQAWLQH</sequence>
<proteinExistence type="evidence at protein level"/>